<keyword id="KW-1185">Reference proteome</keyword>
<reference key="1">
    <citation type="journal article" date="2005" name="Genome Res.">
        <title>Complete genome sequence of the hyperthermophilic archaeon Thermococcus kodakaraensis KOD1 and comparison with Pyrococcus genomes.</title>
        <authorList>
            <person name="Fukui T."/>
            <person name="Atomi H."/>
            <person name="Kanai T."/>
            <person name="Matsumi R."/>
            <person name="Fujiwara S."/>
            <person name="Imanaka T."/>
        </authorList>
    </citation>
    <scope>NUCLEOTIDE SEQUENCE [LARGE SCALE GENOMIC DNA]</scope>
    <source>
        <strain>ATCC BAA-918 / JCM 12380 / KOD1</strain>
    </source>
</reference>
<protein>
    <recommendedName>
        <fullName evidence="1">UPF0282 protein TK1681</fullName>
    </recommendedName>
</protein>
<proteinExistence type="inferred from homology"/>
<accession>Q5JIX0</accession>
<evidence type="ECO:0000255" key="1">
    <source>
        <dbReference type="HAMAP-Rule" id="MF_01406"/>
    </source>
</evidence>
<dbReference type="EMBL" id="AP006878">
    <property type="protein sequence ID" value="BAD85870.1"/>
    <property type="molecule type" value="Genomic_DNA"/>
</dbReference>
<dbReference type="RefSeq" id="WP_011250632.1">
    <property type="nucleotide sequence ID" value="NC_006624.1"/>
</dbReference>
<dbReference type="STRING" id="69014.TK1681"/>
<dbReference type="EnsemblBacteria" id="BAD85870">
    <property type="protein sequence ID" value="BAD85870"/>
    <property type="gene ID" value="TK1681"/>
</dbReference>
<dbReference type="GeneID" id="78448208"/>
<dbReference type="KEGG" id="tko:TK1681"/>
<dbReference type="PATRIC" id="fig|69014.16.peg.1638"/>
<dbReference type="eggNOG" id="arCOG00969">
    <property type="taxonomic scope" value="Archaea"/>
</dbReference>
<dbReference type="HOGENOM" id="CLU_079268_0_0_2"/>
<dbReference type="InParanoid" id="Q5JIX0"/>
<dbReference type="OrthoDB" id="21331at2157"/>
<dbReference type="PhylomeDB" id="Q5JIX0"/>
<dbReference type="Proteomes" id="UP000000536">
    <property type="component" value="Chromosome"/>
</dbReference>
<dbReference type="GO" id="GO:0016787">
    <property type="term" value="F:hydrolase activity"/>
    <property type="evidence" value="ECO:0000318"/>
    <property type="project" value="GO_Central"/>
</dbReference>
<dbReference type="Gene3D" id="3.60.15.10">
    <property type="entry name" value="Ribonuclease Z/Hydroxyacylglutathione hydrolase-like"/>
    <property type="match status" value="1"/>
</dbReference>
<dbReference type="HAMAP" id="MF_01406">
    <property type="entry name" value="UPF0282"/>
    <property type="match status" value="1"/>
</dbReference>
<dbReference type="InterPro" id="IPR001279">
    <property type="entry name" value="Metallo-B-lactamas"/>
</dbReference>
<dbReference type="InterPro" id="IPR036866">
    <property type="entry name" value="RibonucZ/Hydroxyglut_hydro"/>
</dbReference>
<dbReference type="InterPro" id="IPR050114">
    <property type="entry name" value="UPF0173_UPF0282_UlaG_hydrolase"/>
</dbReference>
<dbReference type="InterPro" id="IPR014426">
    <property type="entry name" value="UPF0282_hydrls"/>
</dbReference>
<dbReference type="NCBIfam" id="NF003290">
    <property type="entry name" value="PRK04286.1-6"/>
    <property type="match status" value="1"/>
</dbReference>
<dbReference type="PANTHER" id="PTHR43546">
    <property type="entry name" value="UPF0173 METAL-DEPENDENT HYDROLASE MJ1163-RELATED"/>
    <property type="match status" value="1"/>
</dbReference>
<dbReference type="PANTHER" id="PTHR43546:SF4">
    <property type="entry name" value="UPF0282 PROTEIN MJ1629"/>
    <property type="match status" value="1"/>
</dbReference>
<dbReference type="Pfam" id="PF12706">
    <property type="entry name" value="Lactamase_B_2"/>
    <property type="match status" value="1"/>
</dbReference>
<dbReference type="PIRSF" id="PIRSF004944">
    <property type="entry name" value="UCP004944_hydrls"/>
    <property type="match status" value="1"/>
</dbReference>
<dbReference type="SUPFAM" id="SSF56281">
    <property type="entry name" value="Metallo-hydrolase/oxidoreductase"/>
    <property type="match status" value="1"/>
</dbReference>
<organism>
    <name type="scientific">Thermococcus kodakarensis (strain ATCC BAA-918 / JCM 12380 / KOD1)</name>
    <name type="common">Pyrococcus kodakaraensis (strain KOD1)</name>
    <dbReference type="NCBI Taxonomy" id="69014"/>
    <lineage>
        <taxon>Archaea</taxon>
        <taxon>Methanobacteriati</taxon>
        <taxon>Methanobacteriota</taxon>
        <taxon>Thermococci</taxon>
        <taxon>Thermococcales</taxon>
        <taxon>Thermococcaceae</taxon>
        <taxon>Thermococcus</taxon>
    </lineage>
</organism>
<feature type="chain" id="PRO_0000057638" description="UPF0282 protein TK1681">
    <location>
        <begin position="1"/>
        <end position="299"/>
    </location>
</feature>
<comment type="similarity">
    <text evidence="1">Belongs to the UPF0282 family.</text>
</comment>
<gene>
    <name type="ordered locus">TK1681</name>
</gene>
<sequence length="299" mass="33823">MRVIPLASESLGVRSLATFVEAGGLRILIDPGVALGPKRYGLPPAEVELKTLQQMRKKLQGYARKADIVTISHYHYDHHTPFFEGLYESSSEDYAREIYAGKILFIKHPTENINFSQRKRAWAFLKNAEAIAKKIEYADGRSFDLGGVTIEFSPAVPHGSEGSKLGFVVMVLIDDGSKRVIHASDIQLLNRRSVKWIIEKNPDLLITGGPPTYLGPRATGSWETGVKNLNEIILETNAEVILDHHIVRDKRYPEFFDELEKRPKTFAGYLKVEDRPLEAYRRELHKIEKGEGAEVPFRL</sequence>
<name>Y1681_THEKO</name>